<name>ACCA_ECO7I</name>
<evidence type="ECO:0000255" key="1">
    <source>
        <dbReference type="HAMAP-Rule" id="MF_00823"/>
    </source>
</evidence>
<evidence type="ECO:0000255" key="2">
    <source>
        <dbReference type="PROSITE-ProRule" id="PRU01137"/>
    </source>
</evidence>
<reference key="1">
    <citation type="journal article" date="2009" name="PLoS Genet.">
        <title>Organised genome dynamics in the Escherichia coli species results in highly diverse adaptive paths.</title>
        <authorList>
            <person name="Touchon M."/>
            <person name="Hoede C."/>
            <person name="Tenaillon O."/>
            <person name="Barbe V."/>
            <person name="Baeriswyl S."/>
            <person name="Bidet P."/>
            <person name="Bingen E."/>
            <person name="Bonacorsi S."/>
            <person name="Bouchier C."/>
            <person name="Bouvet O."/>
            <person name="Calteau A."/>
            <person name="Chiapello H."/>
            <person name="Clermont O."/>
            <person name="Cruveiller S."/>
            <person name="Danchin A."/>
            <person name="Diard M."/>
            <person name="Dossat C."/>
            <person name="Karoui M.E."/>
            <person name="Frapy E."/>
            <person name="Garry L."/>
            <person name="Ghigo J.M."/>
            <person name="Gilles A.M."/>
            <person name="Johnson J."/>
            <person name="Le Bouguenec C."/>
            <person name="Lescat M."/>
            <person name="Mangenot S."/>
            <person name="Martinez-Jehanne V."/>
            <person name="Matic I."/>
            <person name="Nassif X."/>
            <person name="Oztas S."/>
            <person name="Petit M.A."/>
            <person name="Pichon C."/>
            <person name="Rouy Z."/>
            <person name="Ruf C.S."/>
            <person name="Schneider D."/>
            <person name="Tourret J."/>
            <person name="Vacherie B."/>
            <person name="Vallenet D."/>
            <person name="Medigue C."/>
            <person name="Rocha E.P.C."/>
            <person name="Denamur E."/>
        </authorList>
    </citation>
    <scope>NUCLEOTIDE SEQUENCE [LARGE SCALE GENOMIC DNA]</scope>
    <source>
        <strain>IAI39 / ExPEC</strain>
    </source>
</reference>
<protein>
    <recommendedName>
        <fullName evidence="1">Acetyl-coenzyme A carboxylase carboxyl transferase subunit alpha</fullName>
        <shortName evidence="1">ACCase subunit alpha</shortName>
        <shortName evidence="1">Acetyl-CoA carboxylase carboxyltransferase subunit alpha</shortName>
        <ecNumber evidence="1">2.1.3.15</ecNumber>
    </recommendedName>
</protein>
<accession>B7NIE7</accession>
<keyword id="KW-0067">ATP-binding</keyword>
<keyword id="KW-0963">Cytoplasm</keyword>
<keyword id="KW-0275">Fatty acid biosynthesis</keyword>
<keyword id="KW-0276">Fatty acid metabolism</keyword>
<keyword id="KW-0444">Lipid biosynthesis</keyword>
<keyword id="KW-0443">Lipid metabolism</keyword>
<keyword id="KW-0547">Nucleotide-binding</keyword>
<keyword id="KW-0808">Transferase</keyword>
<dbReference type="EC" id="2.1.3.15" evidence="1"/>
<dbReference type="EMBL" id="CU928164">
    <property type="protein sequence ID" value="CAR16328.1"/>
    <property type="molecule type" value="Genomic_DNA"/>
</dbReference>
<dbReference type="RefSeq" id="WP_000055746.1">
    <property type="nucleotide sequence ID" value="NC_011750.1"/>
</dbReference>
<dbReference type="RefSeq" id="YP_002406234.1">
    <property type="nucleotide sequence ID" value="NC_011750.1"/>
</dbReference>
<dbReference type="SMR" id="B7NIE7"/>
<dbReference type="STRING" id="585057.ECIAI39_0188"/>
<dbReference type="GeneID" id="86862695"/>
<dbReference type="KEGG" id="ect:ECIAI39_0188"/>
<dbReference type="PATRIC" id="fig|585057.6.peg.201"/>
<dbReference type="HOGENOM" id="CLU_015486_0_2_6"/>
<dbReference type="UniPathway" id="UPA00655">
    <property type="reaction ID" value="UER00711"/>
</dbReference>
<dbReference type="Proteomes" id="UP000000749">
    <property type="component" value="Chromosome"/>
</dbReference>
<dbReference type="GO" id="GO:0009317">
    <property type="term" value="C:acetyl-CoA carboxylase complex"/>
    <property type="evidence" value="ECO:0007669"/>
    <property type="project" value="InterPro"/>
</dbReference>
<dbReference type="GO" id="GO:0003989">
    <property type="term" value="F:acetyl-CoA carboxylase activity"/>
    <property type="evidence" value="ECO:0007669"/>
    <property type="project" value="InterPro"/>
</dbReference>
<dbReference type="GO" id="GO:0005524">
    <property type="term" value="F:ATP binding"/>
    <property type="evidence" value="ECO:0007669"/>
    <property type="project" value="UniProtKB-KW"/>
</dbReference>
<dbReference type="GO" id="GO:0016743">
    <property type="term" value="F:carboxyl- or carbamoyltransferase activity"/>
    <property type="evidence" value="ECO:0007669"/>
    <property type="project" value="UniProtKB-UniRule"/>
</dbReference>
<dbReference type="GO" id="GO:0006633">
    <property type="term" value="P:fatty acid biosynthetic process"/>
    <property type="evidence" value="ECO:0007669"/>
    <property type="project" value="UniProtKB-KW"/>
</dbReference>
<dbReference type="GO" id="GO:2001295">
    <property type="term" value="P:malonyl-CoA biosynthetic process"/>
    <property type="evidence" value="ECO:0007669"/>
    <property type="project" value="UniProtKB-UniRule"/>
</dbReference>
<dbReference type="FunFam" id="3.90.226.10:FF:000008">
    <property type="entry name" value="Acetyl-coenzyme A carboxylase carboxyl transferase subunit alpha"/>
    <property type="match status" value="1"/>
</dbReference>
<dbReference type="Gene3D" id="3.90.226.10">
    <property type="entry name" value="2-enoyl-CoA Hydratase, Chain A, domain 1"/>
    <property type="match status" value="1"/>
</dbReference>
<dbReference type="HAMAP" id="MF_00823">
    <property type="entry name" value="AcetylCoA_CT_alpha"/>
    <property type="match status" value="1"/>
</dbReference>
<dbReference type="InterPro" id="IPR001095">
    <property type="entry name" value="Acetyl_CoA_COase_a_su"/>
</dbReference>
<dbReference type="InterPro" id="IPR029045">
    <property type="entry name" value="ClpP/crotonase-like_dom_sf"/>
</dbReference>
<dbReference type="InterPro" id="IPR011763">
    <property type="entry name" value="COA_CT_C"/>
</dbReference>
<dbReference type="NCBIfam" id="TIGR00513">
    <property type="entry name" value="accA"/>
    <property type="match status" value="1"/>
</dbReference>
<dbReference type="NCBIfam" id="NF041504">
    <property type="entry name" value="AccA_sub"/>
    <property type="match status" value="1"/>
</dbReference>
<dbReference type="NCBIfam" id="NF004344">
    <property type="entry name" value="PRK05724.1"/>
    <property type="match status" value="1"/>
</dbReference>
<dbReference type="PANTHER" id="PTHR42853">
    <property type="entry name" value="ACETYL-COENZYME A CARBOXYLASE CARBOXYL TRANSFERASE SUBUNIT ALPHA"/>
    <property type="match status" value="1"/>
</dbReference>
<dbReference type="PANTHER" id="PTHR42853:SF3">
    <property type="entry name" value="ACETYL-COENZYME A CARBOXYLASE CARBOXYL TRANSFERASE SUBUNIT ALPHA, CHLOROPLASTIC"/>
    <property type="match status" value="1"/>
</dbReference>
<dbReference type="Pfam" id="PF03255">
    <property type="entry name" value="ACCA"/>
    <property type="match status" value="1"/>
</dbReference>
<dbReference type="PRINTS" id="PR01069">
    <property type="entry name" value="ACCCTRFRASEA"/>
</dbReference>
<dbReference type="SUPFAM" id="SSF52096">
    <property type="entry name" value="ClpP/crotonase"/>
    <property type="match status" value="1"/>
</dbReference>
<dbReference type="PROSITE" id="PS50989">
    <property type="entry name" value="COA_CT_CTER"/>
    <property type="match status" value="1"/>
</dbReference>
<gene>
    <name evidence="1" type="primary">accA</name>
    <name type="ordered locus">ECIAI39_0188</name>
</gene>
<proteinExistence type="inferred from homology"/>
<feature type="chain" id="PRO_1000134484" description="Acetyl-coenzyme A carboxylase carboxyl transferase subunit alpha">
    <location>
        <begin position="1"/>
        <end position="319"/>
    </location>
</feature>
<feature type="domain" description="CoA carboxyltransferase C-terminal" evidence="2">
    <location>
        <begin position="35"/>
        <end position="296"/>
    </location>
</feature>
<sequence>MSLNFLDFEQPIAELEAKIDSLTAVSRQDEKLDINIDEEVHRLREKSVELTRKIFADLGAWQIAQLARHPQRPYTLDYVRLAFDEFDELAGDRAYADDKAIVGGIARLDGRPVMIIGHQKGRETKEKIRRNFGMPAPEGYRKALRLMQMAERFKMPIITFIDTPGAYPGVGAEERGQSEAIARNLREMSRLSVPTICTVIGEGGSGGALAIGVGDKVNMLQYSTYSVISPEGCASILWKSADKAPLAAEAMGIIAPRLKELKLIDSIIPEPLGGAHRNPEAMAASLKAQLLADLADLDVLSTEDLKNRRYQRLMSYGYA</sequence>
<organism>
    <name type="scientific">Escherichia coli O7:K1 (strain IAI39 / ExPEC)</name>
    <dbReference type="NCBI Taxonomy" id="585057"/>
    <lineage>
        <taxon>Bacteria</taxon>
        <taxon>Pseudomonadati</taxon>
        <taxon>Pseudomonadota</taxon>
        <taxon>Gammaproteobacteria</taxon>
        <taxon>Enterobacterales</taxon>
        <taxon>Enterobacteriaceae</taxon>
        <taxon>Escherichia</taxon>
    </lineage>
</organism>
<comment type="function">
    <text evidence="1">Component of the acetyl coenzyme A carboxylase (ACC) complex. First, biotin carboxylase catalyzes the carboxylation of biotin on its carrier protein (BCCP) and then the CO(2) group is transferred by the carboxyltransferase to acetyl-CoA to form malonyl-CoA.</text>
</comment>
<comment type="catalytic activity">
    <reaction evidence="1">
        <text>N(6)-carboxybiotinyl-L-lysyl-[protein] + acetyl-CoA = N(6)-biotinyl-L-lysyl-[protein] + malonyl-CoA</text>
        <dbReference type="Rhea" id="RHEA:54728"/>
        <dbReference type="Rhea" id="RHEA-COMP:10505"/>
        <dbReference type="Rhea" id="RHEA-COMP:10506"/>
        <dbReference type="ChEBI" id="CHEBI:57288"/>
        <dbReference type="ChEBI" id="CHEBI:57384"/>
        <dbReference type="ChEBI" id="CHEBI:83144"/>
        <dbReference type="ChEBI" id="CHEBI:83145"/>
        <dbReference type="EC" id="2.1.3.15"/>
    </reaction>
</comment>
<comment type="pathway">
    <text evidence="1">Lipid metabolism; malonyl-CoA biosynthesis; malonyl-CoA from acetyl-CoA: step 1/1.</text>
</comment>
<comment type="subunit">
    <text evidence="1">Acetyl-CoA carboxylase is a heterohexamer composed of biotin carboxyl carrier protein (AccB), biotin carboxylase (AccC) and two subunits each of ACCase subunit alpha (AccA) and ACCase subunit beta (AccD).</text>
</comment>
<comment type="subcellular location">
    <subcellularLocation>
        <location evidence="1">Cytoplasm</location>
    </subcellularLocation>
</comment>
<comment type="similarity">
    <text evidence="1">Belongs to the AccA family.</text>
</comment>